<proteinExistence type="inferred from homology"/>
<feature type="chain" id="PRO_0000368396" description="ATP synthase subunit b">
    <location>
        <begin position="1"/>
        <end position="156"/>
    </location>
</feature>
<feature type="transmembrane region" description="Helical" evidence="1">
    <location>
        <begin position="7"/>
        <end position="29"/>
    </location>
</feature>
<keyword id="KW-0066">ATP synthesis</keyword>
<keyword id="KW-0997">Cell inner membrane</keyword>
<keyword id="KW-1003">Cell membrane</keyword>
<keyword id="KW-0138">CF(0)</keyword>
<keyword id="KW-0375">Hydrogen ion transport</keyword>
<keyword id="KW-0406">Ion transport</keyword>
<keyword id="KW-0472">Membrane</keyword>
<keyword id="KW-0812">Transmembrane</keyword>
<keyword id="KW-1133">Transmembrane helix</keyword>
<keyword id="KW-0813">Transport</keyword>
<comment type="function">
    <text evidence="1">F(1)F(0) ATP synthase produces ATP from ADP in the presence of a proton or sodium gradient. F-type ATPases consist of two structural domains, F(1) containing the extramembraneous catalytic core and F(0) containing the membrane proton channel, linked together by a central stalk and a peripheral stalk. During catalysis, ATP synthesis in the catalytic domain of F(1) is coupled via a rotary mechanism of the central stalk subunits to proton translocation.</text>
</comment>
<comment type="function">
    <text evidence="1">Component of the F(0) channel, it forms part of the peripheral stalk, linking F(1) to F(0).</text>
</comment>
<comment type="subunit">
    <text evidence="1">F-type ATPases have 2 components, F(1) - the catalytic core - and F(0) - the membrane proton channel. F(1) has five subunits: alpha(3), beta(3), gamma(1), delta(1), epsilon(1). F(0) has three main subunits: a(1), b(2) and c(10-14). The alpha and beta chains form an alternating ring which encloses part of the gamma chain. F(1) is attached to F(0) by a central stalk formed by the gamma and epsilon chains, while a peripheral stalk is formed by the delta and b chains.</text>
</comment>
<comment type="subcellular location">
    <subcellularLocation>
        <location evidence="1">Cell inner membrane</location>
        <topology evidence="1">Single-pass membrane protein</topology>
    </subcellularLocation>
</comment>
<comment type="similarity">
    <text evidence="1">Belongs to the ATPase B chain family.</text>
</comment>
<reference key="1">
    <citation type="journal article" date="2005" name="BMC Genomics">
        <title>Bacterial genome adaptation to niches: divergence of the potential virulence genes in three Burkholderia species of different survival strategies.</title>
        <authorList>
            <person name="Kim H.S."/>
            <person name="Schell M.A."/>
            <person name="Yu Y."/>
            <person name="Ulrich R.L."/>
            <person name="Sarria S.H."/>
            <person name="Nierman W.C."/>
            <person name="DeShazer D."/>
        </authorList>
    </citation>
    <scope>NUCLEOTIDE SEQUENCE [LARGE SCALE GENOMIC DNA]</scope>
    <source>
        <strain>ATCC 700388 / DSM 13276 / CCUG 48851 / CIP 106301 / E264</strain>
    </source>
</reference>
<organism>
    <name type="scientific">Burkholderia thailandensis (strain ATCC 700388 / DSM 13276 / CCUG 48851 / CIP 106301 / E264)</name>
    <dbReference type="NCBI Taxonomy" id="271848"/>
    <lineage>
        <taxon>Bacteria</taxon>
        <taxon>Pseudomonadati</taxon>
        <taxon>Pseudomonadota</taxon>
        <taxon>Betaproteobacteria</taxon>
        <taxon>Burkholderiales</taxon>
        <taxon>Burkholderiaceae</taxon>
        <taxon>Burkholderia</taxon>
        <taxon>pseudomallei group</taxon>
    </lineage>
</organism>
<sequence length="156" mass="17122">MNLNATLFAQMVVFLVLAWFTMKFVWPPLINALDERSKKIADGLAAAEKGKAELEAAHKRVDQELAQARNDGQQRIADAEKRALAVADEIKTNAQAEAARIIAQAKAEAEQQIVKARETLRGEVAALAVKGAEQILKREVDQTAHAELLNQLKAEL</sequence>
<protein>
    <recommendedName>
        <fullName evidence="1">ATP synthase subunit b</fullName>
    </recommendedName>
    <alternativeName>
        <fullName evidence="1">ATP synthase F(0) sector subunit b</fullName>
    </alternativeName>
    <alternativeName>
        <fullName evidence="1">ATPase subunit I</fullName>
    </alternativeName>
    <alternativeName>
        <fullName evidence="1">F-type ATPase subunit b</fullName>
        <shortName evidence="1">F-ATPase subunit b</shortName>
    </alternativeName>
</protein>
<accession>Q2STE5</accession>
<dbReference type="EMBL" id="CP000086">
    <property type="protein sequence ID" value="ABC37922.1"/>
    <property type="molecule type" value="Genomic_DNA"/>
</dbReference>
<dbReference type="RefSeq" id="WP_004185283.1">
    <property type="nucleotide sequence ID" value="NZ_CP008785.1"/>
</dbReference>
<dbReference type="SMR" id="Q2STE5"/>
<dbReference type="KEGG" id="bte:BTH_I3312"/>
<dbReference type="HOGENOM" id="CLU_079215_4_5_4"/>
<dbReference type="Proteomes" id="UP000001930">
    <property type="component" value="Chromosome I"/>
</dbReference>
<dbReference type="GO" id="GO:0005886">
    <property type="term" value="C:plasma membrane"/>
    <property type="evidence" value="ECO:0007669"/>
    <property type="project" value="UniProtKB-SubCell"/>
</dbReference>
<dbReference type="GO" id="GO:0045259">
    <property type="term" value="C:proton-transporting ATP synthase complex"/>
    <property type="evidence" value="ECO:0007669"/>
    <property type="project" value="UniProtKB-KW"/>
</dbReference>
<dbReference type="GO" id="GO:0046933">
    <property type="term" value="F:proton-transporting ATP synthase activity, rotational mechanism"/>
    <property type="evidence" value="ECO:0007669"/>
    <property type="project" value="UniProtKB-UniRule"/>
</dbReference>
<dbReference type="GO" id="GO:0046961">
    <property type="term" value="F:proton-transporting ATPase activity, rotational mechanism"/>
    <property type="evidence" value="ECO:0007669"/>
    <property type="project" value="TreeGrafter"/>
</dbReference>
<dbReference type="CDD" id="cd06503">
    <property type="entry name" value="ATP-synt_Fo_b"/>
    <property type="match status" value="1"/>
</dbReference>
<dbReference type="Gene3D" id="6.10.250.1580">
    <property type="match status" value="1"/>
</dbReference>
<dbReference type="HAMAP" id="MF_01398">
    <property type="entry name" value="ATP_synth_b_bprime"/>
    <property type="match status" value="1"/>
</dbReference>
<dbReference type="InterPro" id="IPR028987">
    <property type="entry name" value="ATP_synth_B-like_membr_sf"/>
</dbReference>
<dbReference type="InterPro" id="IPR002146">
    <property type="entry name" value="ATP_synth_b/b'su_bac/chlpt"/>
</dbReference>
<dbReference type="InterPro" id="IPR005864">
    <property type="entry name" value="ATP_synth_F0_bsu_bac"/>
</dbReference>
<dbReference type="InterPro" id="IPR050059">
    <property type="entry name" value="ATP_synthase_B_chain"/>
</dbReference>
<dbReference type="NCBIfam" id="TIGR01144">
    <property type="entry name" value="ATP_synt_b"/>
    <property type="match status" value="1"/>
</dbReference>
<dbReference type="NCBIfam" id="NF004411">
    <property type="entry name" value="PRK05759.1-2"/>
    <property type="match status" value="1"/>
</dbReference>
<dbReference type="PANTHER" id="PTHR33445:SF1">
    <property type="entry name" value="ATP SYNTHASE SUBUNIT B"/>
    <property type="match status" value="1"/>
</dbReference>
<dbReference type="PANTHER" id="PTHR33445">
    <property type="entry name" value="ATP SYNTHASE SUBUNIT B', CHLOROPLASTIC"/>
    <property type="match status" value="1"/>
</dbReference>
<dbReference type="Pfam" id="PF00430">
    <property type="entry name" value="ATP-synt_B"/>
    <property type="match status" value="1"/>
</dbReference>
<dbReference type="SUPFAM" id="SSF81573">
    <property type="entry name" value="F1F0 ATP synthase subunit B, membrane domain"/>
    <property type="match status" value="1"/>
</dbReference>
<evidence type="ECO:0000255" key="1">
    <source>
        <dbReference type="HAMAP-Rule" id="MF_01398"/>
    </source>
</evidence>
<gene>
    <name evidence="1" type="primary">atpF</name>
    <name type="ordered locus">BTH_I3312</name>
</gene>
<name>ATPF_BURTA</name>